<sequence length="171" mass="18925">MKIALGCDHIVTDTKMRVSEFLKSKGHEVIDVGTYDFTRTHYPIFGKKVGEQVVSGNADLGVCICGTGVGINNAVNKVPGVRSALVRDMTSALYAKEELNANVIGFGGRIIGELLMCDIIDAFINAEYKATEENKKLIAKIKHLETSNADQADPHFFDEFLEKWDRGEYHD</sequence>
<proteinExistence type="inferred from homology"/>
<dbReference type="EC" id="5.3.1.26" evidence="1"/>
<dbReference type="EMBL" id="AP009324">
    <property type="protein sequence ID" value="BAF79061.1"/>
    <property type="molecule type" value="Genomic_DNA"/>
</dbReference>
<dbReference type="RefSeq" id="WP_000684743.1">
    <property type="nucleotide sequence ID" value="NC_009782.1"/>
</dbReference>
<dbReference type="SMR" id="A7X578"/>
<dbReference type="KEGG" id="saw:SAHV_2178"/>
<dbReference type="HOGENOM" id="CLU_091396_2_0_9"/>
<dbReference type="UniPathway" id="UPA00702">
    <property type="reaction ID" value="UER00714"/>
</dbReference>
<dbReference type="GO" id="GO:0050044">
    <property type="term" value="F:galactose-6-phosphate isomerase activity"/>
    <property type="evidence" value="ECO:0007669"/>
    <property type="project" value="UniProtKB-UniRule"/>
</dbReference>
<dbReference type="GO" id="GO:0004751">
    <property type="term" value="F:ribose-5-phosphate isomerase activity"/>
    <property type="evidence" value="ECO:0007669"/>
    <property type="project" value="TreeGrafter"/>
</dbReference>
<dbReference type="GO" id="GO:0019316">
    <property type="term" value="P:D-allose catabolic process"/>
    <property type="evidence" value="ECO:0007669"/>
    <property type="project" value="TreeGrafter"/>
</dbReference>
<dbReference type="GO" id="GO:0019388">
    <property type="term" value="P:galactose catabolic process"/>
    <property type="evidence" value="ECO:0007669"/>
    <property type="project" value="UniProtKB-UniPathway"/>
</dbReference>
<dbReference type="GO" id="GO:0019512">
    <property type="term" value="P:lactose catabolic process via tagatose-6-phosphate"/>
    <property type="evidence" value="ECO:0007669"/>
    <property type="project" value="UniProtKB-UniRule"/>
</dbReference>
<dbReference type="GO" id="GO:0009052">
    <property type="term" value="P:pentose-phosphate shunt, non-oxidative branch"/>
    <property type="evidence" value="ECO:0007669"/>
    <property type="project" value="TreeGrafter"/>
</dbReference>
<dbReference type="Gene3D" id="3.40.1400.10">
    <property type="entry name" value="Sugar-phosphate isomerase, RpiB/LacA/LacB"/>
    <property type="match status" value="1"/>
</dbReference>
<dbReference type="HAMAP" id="MF_01556">
    <property type="entry name" value="LacB"/>
    <property type="match status" value="1"/>
</dbReference>
<dbReference type="InterPro" id="IPR004784">
    <property type="entry name" value="LacB"/>
</dbReference>
<dbReference type="InterPro" id="IPR003500">
    <property type="entry name" value="RpiB_LacA_LacB"/>
</dbReference>
<dbReference type="InterPro" id="IPR036569">
    <property type="entry name" value="RpiB_LacA_LacB_sf"/>
</dbReference>
<dbReference type="NCBIfam" id="TIGR01119">
    <property type="entry name" value="lacB"/>
    <property type="match status" value="1"/>
</dbReference>
<dbReference type="NCBIfam" id="NF004051">
    <property type="entry name" value="PRK05571.1"/>
    <property type="match status" value="1"/>
</dbReference>
<dbReference type="NCBIfam" id="NF006381">
    <property type="entry name" value="PRK08622.1"/>
    <property type="match status" value="1"/>
</dbReference>
<dbReference type="NCBIfam" id="NF009258">
    <property type="entry name" value="PRK12615.1"/>
    <property type="match status" value="1"/>
</dbReference>
<dbReference type="NCBIfam" id="TIGR00689">
    <property type="entry name" value="rpiB_lacA_lacB"/>
    <property type="match status" value="1"/>
</dbReference>
<dbReference type="PANTHER" id="PTHR30345:SF0">
    <property type="entry name" value="DNA DAMAGE-REPAIR_TOLERATION PROTEIN DRT102"/>
    <property type="match status" value="1"/>
</dbReference>
<dbReference type="PANTHER" id="PTHR30345">
    <property type="entry name" value="RIBOSE-5-PHOSPHATE ISOMERASE B"/>
    <property type="match status" value="1"/>
</dbReference>
<dbReference type="Pfam" id="PF02502">
    <property type="entry name" value="LacAB_rpiB"/>
    <property type="match status" value="1"/>
</dbReference>
<dbReference type="PIRSF" id="PIRSF005384">
    <property type="entry name" value="RpiB_LacA_B"/>
    <property type="match status" value="1"/>
</dbReference>
<dbReference type="SUPFAM" id="SSF89623">
    <property type="entry name" value="Ribose/Galactose isomerase RpiB/AlsB"/>
    <property type="match status" value="1"/>
</dbReference>
<organism>
    <name type="scientific">Staphylococcus aureus (strain Mu3 / ATCC 700698)</name>
    <dbReference type="NCBI Taxonomy" id="418127"/>
    <lineage>
        <taxon>Bacteria</taxon>
        <taxon>Bacillati</taxon>
        <taxon>Bacillota</taxon>
        <taxon>Bacilli</taxon>
        <taxon>Bacillales</taxon>
        <taxon>Staphylococcaceae</taxon>
        <taxon>Staphylococcus</taxon>
    </lineage>
</organism>
<protein>
    <recommendedName>
        <fullName evidence="1">Galactose-6-phosphate isomerase subunit LacB</fullName>
        <ecNumber evidence="1">5.3.1.26</ecNumber>
    </recommendedName>
</protein>
<feature type="chain" id="PRO_1000068925" description="Galactose-6-phosphate isomerase subunit LacB">
    <location>
        <begin position="1"/>
        <end position="171"/>
    </location>
</feature>
<evidence type="ECO:0000255" key="1">
    <source>
        <dbReference type="HAMAP-Rule" id="MF_01556"/>
    </source>
</evidence>
<gene>
    <name evidence="1" type="primary">lacB</name>
    <name type="ordered locus">SAHV_2178</name>
</gene>
<comment type="catalytic activity">
    <reaction evidence="1">
        <text>aldehydo-D-galactose 6-phosphate = keto-D-tagatose 6-phosphate</text>
        <dbReference type="Rhea" id="RHEA:13033"/>
        <dbReference type="ChEBI" id="CHEBI:58255"/>
        <dbReference type="ChEBI" id="CHEBI:134283"/>
        <dbReference type="EC" id="5.3.1.26"/>
    </reaction>
</comment>
<comment type="pathway">
    <text evidence="1">Carbohydrate metabolism; D-galactose 6-phosphate degradation; D-tagatose 6-phosphate from D-galactose 6-phosphate: step 1/1.</text>
</comment>
<comment type="subunit">
    <text evidence="1">Heteromultimeric protein consisting of LacA and LacB.</text>
</comment>
<comment type="similarity">
    <text evidence="1">Belongs to the LacAB/RpiB family.</text>
</comment>
<name>LACB_STAA1</name>
<accession>A7X578</accession>
<reference key="1">
    <citation type="journal article" date="2008" name="Antimicrob. Agents Chemother.">
        <title>Mutated response regulator graR is responsible for phenotypic conversion of Staphylococcus aureus from heterogeneous vancomycin-intermediate resistance to vancomycin-intermediate resistance.</title>
        <authorList>
            <person name="Neoh H.-M."/>
            <person name="Cui L."/>
            <person name="Yuzawa H."/>
            <person name="Takeuchi F."/>
            <person name="Matsuo M."/>
            <person name="Hiramatsu K."/>
        </authorList>
    </citation>
    <scope>NUCLEOTIDE SEQUENCE [LARGE SCALE GENOMIC DNA]</scope>
    <source>
        <strain>Mu3 / ATCC 700698</strain>
    </source>
</reference>
<keyword id="KW-0413">Isomerase</keyword>
<keyword id="KW-0423">Lactose metabolism</keyword>